<feature type="chain" id="PRO_0000148412" description="Dihydroorotate dehydrogenase B (NAD(+)), catalytic subunit">
    <location>
        <begin position="1"/>
        <end position="299"/>
    </location>
</feature>
<feature type="active site" description="Nucleophile">
    <location>
        <position position="124"/>
    </location>
</feature>
<feature type="binding site" evidence="1">
    <location>
        <position position="19"/>
    </location>
    <ligand>
        <name>FMN</name>
        <dbReference type="ChEBI" id="CHEBI:58210"/>
    </ligand>
</feature>
<feature type="binding site" evidence="1">
    <location>
        <begin position="43"/>
        <end position="44"/>
    </location>
    <ligand>
        <name>FMN</name>
        <dbReference type="ChEBI" id="CHEBI:58210"/>
    </ligand>
</feature>
<feature type="binding site" evidence="1">
    <location>
        <position position="43"/>
    </location>
    <ligand>
        <name>substrate</name>
    </ligand>
</feature>
<feature type="binding site" evidence="1">
    <location>
        <begin position="67"/>
        <end position="71"/>
    </location>
    <ligand>
        <name>substrate</name>
    </ligand>
</feature>
<feature type="binding site" evidence="1">
    <location>
        <position position="121"/>
    </location>
    <ligand>
        <name>FMN</name>
        <dbReference type="ChEBI" id="CHEBI:58210"/>
    </ligand>
</feature>
<feature type="binding site" evidence="1">
    <location>
        <position position="121"/>
    </location>
    <ligand>
        <name>substrate</name>
    </ligand>
</feature>
<feature type="binding site" evidence="1">
    <location>
        <position position="159"/>
    </location>
    <ligand>
        <name>FMN</name>
        <dbReference type="ChEBI" id="CHEBI:58210"/>
    </ligand>
</feature>
<feature type="binding site" evidence="1">
    <location>
        <position position="185"/>
    </location>
    <ligand>
        <name>FMN</name>
        <dbReference type="ChEBI" id="CHEBI:58210"/>
    </ligand>
</feature>
<feature type="binding site" evidence="1">
    <location>
        <begin position="186"/>
        <end position="187"/>
    </location>
    <ligand>
        <name>substrate</name>
    </ligand>
</feature>
<feature type="binding site" evidence="1">
    <location>
        <position position="211"/>
    </location>
    <ligand>
        <name>FMN</name>
        <dbReference type="ChEBI" id="CHEBI:58210"/>
    </ligand>
</feature>
<feature type="binding site" evidence="1">
    <location>
        <begin position="237"/>
        <end position="238"/>
    </location>
    <ligand>
        <name>FMN</name>
        <dbReference type="ChEBI" id="CHEBI:58210"/>
    </ligand>
</feature>
<feature type="binding site" evidence="1">
    <location>
        <begin position="259"/>
        <end position="260"/>
    </location>
    <ligand>
        <name>FMN</name>
        <dbReference type="ChEBI" id="CHEBI:58210"/>
    </ligand>
</feature>
<evidence type="ECO:0000250" key="1"/>
<evidence type="ECO:0000305" key="2"/>
<gene>
    <name type="primary">pyrD</name>
    <name type="ordered locus">PYRAB06530</name>
    <name type="ORF">PAB1936</name>
</gene>
<accession>Q9V0Y6</accession>
<accession>G8ZJB1</accession>
<protein>
    <recommendedName>
        <fullName>Dihydroorotate dehydrogenase B (NAD(+)), catalytic subunit</fullName>
        <shortName>DHOD B</shortName>
        <shortName>DHODase B</shortName>
        <shortName>DHOdehase B</shortName>
        <ecNumber>1.3.1.14</ecNumber>
    </recommendedName>
    <alternativeName>
        <fullName>Dihydroorotate oxidase B</fullName>
    </alternativeName>
    <alternativeName>
        <fullName>Orotate reductase (NADH)</fullName>
    </alternativeName>
</protein>
<dbReference type="EC" id="1.3.1.14"/>
<dbReference type="EMBL" id="AJ248285">
    <property type="protein sequence ID" value="CAB49566.1"/>
    <property type="status" value="ALT_INIT"/>
    <property type="molecule type" value="Genomic_DNA"/>
</dbReference>
<dbReference type="EMBL" id="HE613800">
    <property type="protein sequence ID" value="CCE70038.1"/>
    <property type="molecule type" value="Genomic_DNA"/>
</dbReference>
<dbReference type="PIR" id="E75106">
    <property type="entry name" value="E75106"/>
</dbReference>
<dbReference type="RefSeq" id="WP_048146595.1">
    <property type="nucleotide sequence ID" value="NC_000868.1"/>
</dbReference>
<dbReference type="SMR" id="Q9V0Y6"/>
<dbReference type="STRING" id="272844.PAB1936"/>
<dbReference type="KEGG" id="pab:PAB1936"/>
<dbReference type="PATRIC" id="fig|272844.11.peg.684"/>
<dbReference type="eggNOG" id="arCOG00603">
    <property type="taxonomic scope" value="Archaea"/>
</dbReference>
<dbReference type="HOGENOM" id="CLU_042042_0_1_2"/>
<dbReference type="OrthoDB" id="36608at2157"/>
<dbReference type="UniPathway" id="UPA00070">
    <property type="reaction ID" value="UER00945"/>
</dbReference>
<dbReference type="Proteomes" id="UP000000810">
    <property type="component" value="Chromosome"/>
</dbReference>
<dbReference type="Proteomes" id="UP000009139">
    <property type="component" value="Chromosome"/>
</dbReference>
<dbReference type="GO" id="GO:0005737">
    <property type="term" value="C:cytoplasm"/>
    <property type="evidence" value="ECO:0007669"/>
    <property type="project" value="UniProtKB-SubCell"/>
</dbReference>
<dbReference type="GO" id="GO:0004589">
    <property type="term" value="F:dihydroorotate dehydrogenase (NAD+) activity"/>
    <property type="evidence" value="ECO:0007669"/>
    <property type="project" value="UniProtKB-EC"/>
</dbReference>
<dbReference type="GO" id="GO:0006207">
    <property type="term" value="P:'de novo' pyrimidine nucleobase biosynthetic process"/>
    <property type="evidence" value="ECO:0007669"/>
    <property type="project" value="InterPro"/>
</dbReference>
<dbReference type="GO" id="GO:0044205">
    <property type="term" value="P:'de novo' UMP biosynthetic process"/>
    <property type="evidence" value="ECO:0007669"/>
    <property type="project" value="UniProtKB-UniRule"/>
</dbReference>
<dbReference type="CDD" id="cd04740">
    <property type="entry name" value="DHOD_1B_like"/>
    <property type="match status" value="1"/>
</dbReference>
<dbReference type="FunFam" id="3.20.20.70:FF:000027">
    <property type="entry name" value="Dihydropyrimidine dehydrogenase [NADP(+)]"/>
    <property type="match status" value="1"/>
</dbReference>
<dbReference type="Gene3D" id="3.20.20.70">
    <property type="entry name" value="Aldolase class I"/>
    <property type="match status" value="1"/>
</dbReference>
<dbReference type="HAMAP" id="MF_00224">
    <property type="entry name" value="DHO_dh_type1"/>
    <property type="match status" value="1"/>
</dbReference>
<dbReference type="InterPro" id="IPR013785">
    <property type="entry name" value="Aldolase_TIM"/>
</dbReference>
<dbReference type="InterPro" id="IPR033888">
    <property type="entry name" value="DHOD_1B"/>
</dbReference>
<dbReference type="InterPro" id="IPR024920">
    <property type="entry name" value="Dihydroorotate_DH_1"/>
</dbReference>
<dbReference type="InterPro" id="IPR012135">
    <property type="entry name" value="Dihydroorotate_DH_1_2"/>
</dbReference>
<dbReference type="InterPro" id="IPR005720">
    <property type="entry name" value="Dihydroorotate_DH_cat"/>
</dbReference>
<dbReference type="InterPro" id="IPR001295">
    <property type="entry name" value="Dihydroorotate_DH_CS"/>
</dbReference>
<dbReference type="InterPro" id="IPR049622">
    <property type="entry name" value="Dihydroorotate_DH_I"/>
</dbReference>
<dbReference type="NCBIfam" id="NF005574">
    <property type="entry name" value="PRK07259.1"/>
    <property type="match status" value="1"/>
</dbReference>
<dbReference type="NCBIfam" id="TIGR01037">
    <property type="entry name" value="pyrD_sub1_fam"/>
    <property type="match status" value="1"/>
</dbReference>
<dbReference type="PANTHER" id="PTHR43073">
    <property type="entry name" value="DIHYDROPYRIMIDINE DEHYDROGENASE [NADP(+)]"/>
    <property type="match status" value="1"/>
</dbReference>
<dbReference type="PANTHER" id="PTHR43073:SF2">
    <property type="entry name" value="DIHYDROPYRIMIDINE DEHYDROGENASE [NADP(+)]"/>
    <property type="match status" value="1"/>
</dbReference>
<dbReference type="Pfam" id="PF01180">
    <property type="entry name" value="DHO_dh"/>
    <property type="match status" value="1"/>
</dbReference>
<dbReference type="PIRSF" id="PIRSF000164">
    <property type="entry name" value="DHO_oxidase"/>
    <property type="match status" value="1"/>
</dbReference>
<dbReference type="SUPFAM" id="SSF51395">
    <property type="entry name" value="FMN-linked oxidoreductases"/>
    <property type="match status" value="1"/>
</dbReference>
<dbReference type="PROSITE" id="PS00911">
    <property type="entry name" value="DHODEHASE_1"/>
    <property type="match status" value="1"/>
</dbReference>
<dbReference type="PROSITE" id="PS00912">
    <property type="entry name" value="DHODEHASE_2"/>
    <property type="match status" value="1"/>
</dbReference>
<sequence>MLEVNLFGIKFKNPLILASGVVDMTPELLRRAHREGAGGVVTKSIGMEPRKGYENPTIVELPYGLINAMGLPNPGWEAFLEEFRKEKFDFPVIVSIFGGTPEEFAFLAEKLGEVADAFELNLSCPHAKGYGMEIGQKPENVYEVVKAVKDVTDKPVIAKLTPNVSDIRELGLAAEKAGADGVSAINTVKAIAIDIYAKRPILSNKFGGYSGPGVKPIALRAVYDLASSLDIPVIGIGGITTWQDAVEFLLAGASALQIGTAVYLRGFSVFREIAEGISRYLKEEGYSSVKEIIGLALKV</sequence>
<proteinExistence type="inferred from homology"/>
<reference key="1">
    <citation type="journal article" date="2003" name="Mol. Microbiol.">
        <title>An integrated analysis of the genome of the hyperthermophilic archaeon Pyrococcus abyssi.</title>
        <authorList>
            <person name="Cohen G.N."/>
            <person name="Barbe V."/>
            <person name="Flament D."/>
            <person name="Galperin M."/>
            <person name="Heilig R."/>
            <person name="Lecompte O."/>
            <person name="Poch O."/>
            <person name="Prieur D."/>
            <person name="Querellou J."/>
            <person name="Ripp R."/>
            <person name="Thierry J.-C."/>
            <person name="Van der Oost J."/>
            <person name="Weissenbach J."/>
            <person name="Zivanovic Y."/>
            <person name="Forterre P."/>
        </authorList>
    </citation>
    <scope>NUCLEOTIDE SEQUENCE [LARGE SCALE GENOMIC DNA]</scope>
    <source>
        <strain>GE5 / Orsay</strain>
    </source>
</reference>
<reference key="2">
    <citation type="journal article" date="2012" name="Curr. Microbiol.">
        <title>Re-annotation of two hyperthermophilic archaea Pyrococcus abyssi GE5 and Pyrococcus furiosus DSM 3638.</title>
        <authorList>
            <person name="Gao J."/>
            <person name="Wang J."/>
        </authorList>
    </citation>
    <scope>GENOME REANNOTATION</scope>
    <source>
        <strain>GE5 / Orsay</strain>
    </source>
</reference>
<comment type="function">
    <text evidence="1">Catalyzes the conversion of dihydroorotate to orotate with NAD(+) as electron acceptor.</text>
</comment>
<comment type="catalytic activity">
    <reaction>
        <text>(S)-dihydroorotate + NAD(+) = orotate + NADH + H(+)</text>
        <dbReference type="Rhea" id="RHEA:13513"/>
        <dbReference type="ChEBI" id="CHEBI:15378"/>
        <dbReference type="ChEBI" id="CHEBI:30839"/>
        <dbReference type="ChEBI" id="CHEBI:30864"/>
        <dbReference type="ChEBI" id="CHEBI:57540"/>
        <dbReference type="ChEBI" id="CHEBI:57945"/>
        <dbReference type="EC" id="1.3.1.14"/>
    </reaction>
</comment>
<comment type="cofactor">
    <cofactor evidence="1">
        <name>FMN</name>
        <dbReference type="ChEBI" id="CHEBI:58210"/>
    </cofactor>
    <text evidence="1">Binds 1 FMN per subunit.</text>
</comment>
<comment type="pathway">
    <text>Pyrimidine metabolism; UMP biosynthesis via de novo pathway; orotate from (S)-dihydroorotate (NAD(+) route): step 1/1.</text>
</comment>
<comment type="subunit">
    <text evidence="1">Heterotetramer of 2 PyrK and 2 PyrD type B subunits.</text>
</comment>
<comment type="subcellular location">
    <subcellularLocation>
        <location evidence="1">Cytoplasm</location>
    </subcellularLocation>
</comment>
<comment type="similarity">
    <text evidence="2">Belongs to the dihydroorotate dehydrogenase family. Type 1 subfamily.</text>
</comment>
<comment type="sequence caution" evidence="2">
    <conflict type="erroneous initiation">
        <sequence resource="EMBL-CDS" id="CAB49566"/>
    </conflict>
    <text>Extended N-terminus.</text>
</comment>
<name>PYRDB_PYRAB</name>
<keyword id="KW-0963">Cytoplasm</keyword>
<keyword id="KW-0285">Flavoprotein</keyword>
<keyword id="KW-0288">FMN</keyword>
<keyword id="KW-0520">NAD</keyword>
<keyword id="KW-0560">Oxidoreductase</keyword>
<keyword id="KW-0665">Pyrimidine biosynthesis</keyword>
<organism>
    <name type="scientific">Pyrococcus abyssi (strain GE5 / Orsay)</name>
    <dbReference type="NCBI Taxonomy" id="272844"/>
    <lineage>
        <taxon>Archaea</taxon>
        <taxon>Methanobacteriati</taxon>
        <taxon>Methanobacteriota</taxon>
        <taxon>Thermococci</taxon>
        <taxon>Thermococcales</taxon>
        <taxon>Thermococcaceae</taxon>
        <taxon>Pyrococcus</taxon>
    </lineage>
</organism>